<evidence type="ECO:0000255" key="1">
    <source>
        <dbReference type="HAMAP-Rule" id="MF_00361"/>
    </source>
</evidence>
<name>NADK_HELPY</name>
<organism>
    <name type="scientific">Helicobacter pylori (strain ATCC 700392 / 26695)</name>
    <name type="common">Campylobacter pylori</name>
    <dbReference type="NCBI Taxonomy" id="85962"/>
    <lineage>
        <taxon>Bacteria</taxon>
        <taxon>Pseudomonadati</taxon>
        <taxon>Campylobacterota</taxon>
        <taxon>Epsilonproteobacteria</taxon>
        <taxon>Campylobacterales</taxon>
        <taxon>Helicobacteraceae</taxon>
        <taxon>Helicobacter</taxon>
    </lineage>
</organism>
<sequence length="284" mass="31632">MKDSLQTIGVFVRPTHYQNPLFEKLEQAKEWVLKLLEDEGFESFMIDSLDGAKDARLIEKADAFLCLGGDGTILGALRMTHSYNKPCFGVRIGNLGFLSAVELNGLKDFLQDFKQDRIKLEEHLALEGRIGKTSFYAINEIVIAKKKALGVLDIKAYAGHTPFNTYKGDGLIIATPLGSTAYNLSAHGPIVHALSQSYILTPLCDFSLTQRPLVLGAEFCLNFCAHEDALVVIDGQATYDLKANQPLYIQKSPTTTKLLQKNSRDYFKVLKEKLLWGESPSKKR</sequence>
<comment type="function">
    <text evidence="1">Involved in the regulation of the intracellular balance of NAD and NADP, and is a key enzyme in the biosynthesis of NADP. Catalyzes specifically the phosphorylation on 2'-hydroxyl of the adenosine moiety of NAD to yield NADP.</text>
</comment>
<comment type="catalytic activity">
    <reaction evidence="1">
        <text>NAD(+) + ATP = ADP + NADP(+) + H(+)</text>
        <dbReference type="Rhea" id="RHEA:18629"/>
        <dbReference type="ChEBI" id="CHEBI:15378"/>
        <dbReference type="ChEBI" id="CHEBI:30616"/>
        <dbReference type="ChEBI" id="CHEBI:57540"/>
        <dbReference type="ChEBI" id="CHEBI:58349"/>
        <dbReference type="ChEBI" id="CHEBI:456216"/>
        <dbReference type="EC" id="2.7.1.23"/>
    </reaction>
</comment>
<comment type="cofactor">
    <cofactor evidence="1">
        <name>a divalent metal cation</name>
        <dbReference type="ChEBI" id="CHEBI:60240"/>
    </cofactor>
</comment>
<comment type="subcellular location">
    <subcellularLocation>
        <location evidence="1">Cytoplasm</location>
    </subcellularLocation>
</comment>
<comment type="similarity">
    <text evidence="1">Belongs to the NAD kinase family.</text>
</comment>
<feature type="chain" id="PRO_0000120623" description="NAD kinase">
    <location>
        <begin position="1"/>
        <end position="284"/>
    </location>
</feature>
<feature type="active site" description="Proton acceptor" evidence="1">
    <location>
        <position position="70"/>
    </location>
</feature>
<feature type="binding site" evidence="1">
    <location>
        <begin position="70"/>
        <end position="71"/>
    </location>
    <ligand>
        <name>NAD(+)</name>
        <dbReference type="ChEBI" id="CHEBI:57540"/>
    </ligand>
</feature>
<feature type="binding site" evidence="1">
    <location>
        <begin position="139"/>
        <end position="140"/>
    </location>
    <ligand>
        <name>NAD(+)</name>
        <dbReference type="ChEBI" id="CHEBI:57540"/>
    </ligand>
</feature>
<feature type="binding site" evidence="1">
    <location>
        <position position="167"/>
    </location>
    <ligand>
        <name>NAD(+)</name>
        <dbReference type="ChEBI" id="CHEBI:57540"/>
    </ligand>
</feature>
<feature type="binding site" evidence="1">
    <location>
        <position position="169"/>
    </location>
    <ligand>
        <name>NAD(+)</name>
        <dbReference type="ChEBI" id="CHEBI:57540"/>
    </ligand>
</feature>
<feature type="binding site" evidence="1">
    <location>
        <position position="177"/>
    </location>
    <ligand>
        <name>NAD(+)</name>
        <dbReference type="ChEBI" id="CHEBI:57540"/>
    </ligand>
</feature>
<feature type="binding site" evidence="1">
    <location>
        <begin position="180"/>
        <end position="185"/>
    </location>
    <ligand>
        <name>NAD(+)</name>
        <dbReference type="ChEBI" id="CHEBI:57540"/>
    </ligand>
</feature>
<feature type="binding site" evidence="1">
    <location>
        <position position="236"/>
    </location>
    <ligand>
        <name>NAD(+)</name>
        <dbReference type="ChEBI" id="CHEBI:57540"/>
    </ligand>
</feature>
<keyword id="KW-0067">ATP-binding</keyword>
<keyword id="KW-0963">Cytoplasm</keyword>
<keyword id="KW-0418">Kinase</keyword>
<keyword id="KW-0520">NAD</keyword>
<keyword id="KW-0521">NADP</keyword>
<keyword id="KW-0547">Nucleotide-binding</keyword>
<keyword id="KW-1185">Reference proteome</keyword>
<keyword id="KW-0808">Transferase</keyword>
<accession>O25944</accession>
<reference key="1">
    <citation type="journal article" date="1997" name="Nature">
        <title>The complete genome sequence of the gastric pathogen Helicobacter pylori.</title>
        <authorList>
            <person name="Tomb J.-F."/>
            <person name="White O."/>
            <person name="Kerlavage A.R."/>
            <person name="Clayton R.A."/>
            <person name="Sutton G.G."/>
            <person name="Fleischmann R.D."/>
            <person name="Ketchum K.A."/>
            <person name="Klenk H.-P."/>
            <person name="Gill S.R."/>
            <person name="Dougherty B.A."/>
            <person name="Nelson K.E."/>
            <person name="Quackenbush J."/>
            <person name="Zhou L."/>
            <person name="Kirkness E.F."/>
            <person name="Peterson S.N."/>
            <person name="Loftus B.J."/>
            <person name="Richardson D.L."/>
            <person name="Dodson R.J."/>
            <person name="Khalak H.G."/>
            <person name="Glodek A."/>
            <person name="McKenney K."/>
            <person name="FitzGerald L.M."/>
            <person name="Lee N."/>
            <person name="Adams M.D."/>
            <person name="Hickey E.K."/>
            <person name="Berg D.E."/>
            <person name="Gocayne J.D."/>
            <person name="Utterback T.R."/>
            <person name="Peterson J.D."/>
            <person name="Kelley J.M."/>
            <person name="Cotton M.D."/>
            <person name="Weidman J.F."/>
            <person name="Fujii C."/>
            <person name="Bowman C."/>
            <person name="Watthey L."/>
            <person name="Wallin E."/>
            <person name="Hayes W.S."/>
            <person name="Borodovsky M."/>
            <person name="Karp P.D."/>
            <person name="Smith H.O."/>
            <person name="Fraser C.M."/>
            <person name="Venter J.C."/>
        </authorList>
    </citation>
    <scope>NUCLEOTIDE SEQUENCE [LARGE SCALE GENOMIC DNA]</scope>
    <source>
        <strain>ATCC 700392 / 26695</strain>
    </source>
</reference>
<protein>
    <recommendedName>
        <fullName evidence="1">NAD kinase</fullName>
        <ecNumber evidence="1">2.7.1.23</ecNumber>
    </recommendedName>
    <alternativeName>
        <fullName evidence="1">ATP-dependent NAD kinase</fullName>
    </alternativeName>
</protein>
<proteinExistence type="inferred from homology"/>
<gene>
    <name evidence="1" type="primary">nadK</name>
    <name type="ordered locus">HP_1394</name>
</gene>
<dbReference type="EC" id="2.7.1.23" evidence="1"/>
<dbReference type="EMBL" id="AE000511">
    <property type="protein sequence ID" value="AAD08434.1"/>
    <property type="molecule type" value="Genomic_DNA"/>
</dbReference>
<dbReference type="PIR" id="B64694">
    <property type="entry name" value="B64694"/>
</dbReference>
<dbReference type="RefSeq" id="NP_208185.1">
    <property type="nucleotide sequence ID" value="NC_000915.1"/>
</dbReference>
<dbReference type="RefSeq" id="WP_000655300.1">
    <property type="nucleotide sequence ID" value="NC_018939.1"/>
</dbReference>
<dbReference type="SMR" id="O25944"/>
<dbReference type="FunCoup" id="O25944">
    <property type="interactions" value="354"/>
</dbReference>
<dbReference type="IntAct" id="O25944">
    <property type="interactions" value="4"/>
</dbReference>
<dbReference type="MINT" id="O25944"/>
<dbReference type="STRING" id="85962.HP_1394"/>
<dbReference type="PaxDb" id="85962-C694_07200"/>
<dbReference type="EnsemblBacteria" id="AAD08434">
    <property type="protein sequence ID" value="AAD08434"/>
    <property type="gene ID" value="HP_1394"/>
</dbReference>
<dbReference type="KEGG" id="heo:C694_07200"/>
<dbReference type="KEGG" id="hpy:HP_1394"/>
<dbReference type="PATRIC" id="fig|85962.47.peg.1493"/>
<dbReference type="eggNOG" id="COG0061">
    <property type="taxonomic scope" value="Bacteria"/>
</dbReference>
<dbReference type="InParanoid" id="O25944"/>
<dbReference type="OrthoDB" id="9774737at2"/>
<dbReference type="PhylomeDB" id="O25944"/>
<dbReference type="Proteomes" id="UP000000429">
    <property type="component" value="Chromosome"/>
</dbReference>
<dbReference type="GO" id="GO:0005737">
    <property type="term" value="C:cytoplasm"/>
    <property type="evidence" value="ECO:0007669"/>
    <property type="project" value="UniProtKB-SubCell"/>
</dbReference>
<dbReference type="GO" id="GO:0005524">
    <property type="term" value="F:ATP binding"/>
    <property type="evidence" value="ECO:0007669"/>
    <property type="project" value="UniProtKB-KW"/>
</dbReference>
<dbReference type="GO" id="GO:0046872">
    <property type="term" value="F:metal ion binding"/>
    <property type="evidence" value="ECO:0007669"/>
    <property type="project" value="UniProtKB-UniRule"/>
</dbReference>
<dbReference type="GO" id="GO:0051287">
    <property type="term" value="F:NAD binding"/>
    <property type="evidence" value="ECO:0007669"/>
    <property type="project" value="UniProtKB-ARBA"/>
</dbReference>
<dbReference type="GO" id="GO:0003951">
    <property type="term" value="F:NAD+ kinase activity"/>
    <property type="evidence" value="ECO:0000318"/>
    <property type="project" value="GO_Central"/>
</dbReference>
<dbReference type="GO" id="GO:0019674">
    <property type="term" value="P:NAD metabolic process"/>
    <property type="evidence" value="ECO:0007669"/>
    <property type="project" value="InterPro"/>
</dbReference>
<dbReference type="GO" id="GO:0006741">
    <property type="term" value="P:NADP biosynthetic process"/>
    <property type="evidence" value="ECO:0000318"/>
    <property type="project" value="GO_Central"/>
</dbReference>
<dbReference type="Gene3D" id="3.40.50.10330">
    <property type="entry name" value="Probable inorganic polyphosphate/atp-NAD kinase, domain 1"/>
    <property type="match status" value="1"/>
</dbReference>
<dbReference type="Gene3D" id="2.60.200.30">
    <property type="entry name" value="Probable inorganic polyphosphate/atp-NAD kinase, domain 2"/>
    <property type="match status" value="1"/>
</dbReference>
<dbReference type="HAMAP" id="MF_00361">
    <property type="entry name" value="NAD_kinase"/>
    <property type="match status" value="1"/>
</dbReference>
<dbReference type="InterPro" id="IPR017438">
    <property type="entry name" value="ATP-NAD_kinase_N"/>
</dbReference>
<dbReference type="InterPro" id="IPR017437">
    <property type="entry name" value="ATP-NAD_kinase_PpnK-typ_C"/>
</dbReference>
<dbReference type="InterPro" id="IPR016064">
    <property type="entry name" value="NAD/diacylglycerol_kinase_sf"/>
</dbReference>
<dbReference type="InterPro" id="IPR002504">
    <property type="entry name" value="NADK"/>
</dbReference>
<dbReference type="PANTHER" id="PTHR20275">
    <property type="entry name" value="NAD KINASE"/>
    <property type="match status" value="1"/>
</dbReference>
<dbReference type="PANTHER" id="PTHR20275:SF0">
    <property type="entry name" value="NAD KINASE"/>
    <property type="match status" value="1"/>
</dbReference>
<dbReference type="Pfam" id="PF01513">
    <property type="entry name" value="NAD_kinase"/>
    <property type="match status" value="1"/>
</dbReference>
<dbReference type="Pfam" id="PF20143">
    <property type="entry name" value="NAD_kinase_C"/>
    <property type="match status" value="1"/>
</dbReference>
<dbReference type="SUPFAM" id="SSF111331">
    <property type="entry name" value="NAD kinase/diacylglycerol kinase-like"/>
    <property type="match status" value="1"/>
</dbReference>